<name>MECA_STRPI</name>
<feature type="chain" id="PRO_1000137285" description="Adapter protein MecA">
    <location>
        <begin position="1"/>
        <end position="245"/>
    </location>
</feature>
<protein>
    <recommendedName>
        <fullName evidence="1">Adapter protein MecA</fullName>
    </recommendedName>
</protein>
<dbReference type="EMBL" id="CP000936">
    <property type="protein sequence ID" value="ACA37300.1"/>
    <property type="molecule type" value="Genomic_DNA"/>
</dbReference>
<dbReference type="RefSeq" id="WP_000782676.1">
    <property type="nucleotide sequence ID" value="NC_010380.1"/>
</dbReference>
<dbReference type="SMR" id="B1ICG3"/>
<dbReference type="GeneID" id="45653378"/>
<dbReference type="KEGG" id="spv:SPH_1494"/>
<dbReference type="HOGENOM" id="CLU_071496_1_0_9"/>
<dbReference type="Proteomes" id="UP000002163">
    <property type="component" value="Chromosome"/>
</dbReference>
<dbReference type="GO" id="GO:0030674">
    <property type="term" value="F:protein-macromolecule adaptor activity"/>
    <property type="evidence" value="ECO:0007669"/>
    <property type="project" value="UniProtKB-UniRule"/>
</dbReference>
<dbReference type="Gene3D" id="3.30.70.1950">
    <property type="match status" value="1"/>
</dbReference>
<dbReference type="HAMAP" id="MF_01124">
    <property type="entry name" value="MecA"/>
    <property type="match status" value="1"/>
</dbReference>
<dbReference type="InterPro" id="IPR038471">
    <property type="entry name" value="MecA_C_sf"/>
</dbReference>
<dbReference type="InterPro" id="IPR008681">
    <property type="entry name" value="Neg-reg_MecA"/>
</dbReference>
<dbReference type="NCBIfam" id="NF002643">
    <property type="entry name" value="PRK02315.1-4"/>
    <property type="match status" value="1"/>
</dbReference>
<dbReference type="PANTHER" id="PTHR39161">
    <property type="entry name" value="ADAPTER PROTEIN MECA"/>
    <property type="match status" value="1"/>
</dbReference>
<dbReference type="PANTHER" id="PTHR39161:SF1">
    <property type="entry name" value="ADAPTER PROTEIN MECA 1"/>
    <property type="match status" value="1"/>
</dbReference>
<dbReference type="Pfam" id="PF05389">
    <property type="entry name" value="MecA"/>
    <property type="match status" value="1"/>
</dbReference>
<dbReference type="PIRSF" id="PIRSF029008">
    <property type="entry name" value="MecA"/>
    <property type="match status" value="1"/>
</dbReference>
<proteinExistence type="inferred from homology"/>
<evidence type="ECO:0000255" key="1">
    <source>
        <dbReference type="HAMAP-Rule" id="MF_01124"/>
    </source>
</evidence>
<gene>
    <name evidence="1" type="primary">mecA</name>
    <name type="ordered locus">SPH_1494</name>
</gene>
<sequence>MKMKQISDTTLKITMSLEDLMDRGMEIADFLVPQEKTEEFFYAILDELEMPDSFLDTGMLSFRVTPKPDKVDVFVTKSKIDQNLDFEDLSDLPDMEELAQMSPDEFIKTLEKSIADKTKDDIEAIQSLEQVEAKEEEQEQAEQEAESKKEPYIYYILSFAKLADLVAFAKTVTFEMETSELYKMNERYYLTILVDIENHPSPYPAWLLARMREFADDSDISRSVLQEYGQVLMSHDAVLNLQKIG</sequence>
<reference key="1">
    <citation type="journal article" date="2010" name="Genome Biol.">
        <title>Structure and dynamics of the pan-genome of Streptococcus pneumoniae and closely related species.</title>
        <authorList>
            <person name="Donati C."/>
            <person name="Hiller N.L."/>
            <person name="Tettelin H."/>
            <person name="Muzzi A."/>
            <person name="Croucher N.J."/>
            <person name="Angiuoli S.V."/>
            <person name="Oggioni M."/>
            <person name="Dunning Hotopp J.C."/>
            <person name="Hu F.Z."/>
            <person name="Riley D.R."/>
            <person name="Covacci A."/>
            <person name="Mitchell T.J."/>
            <person name="Bentley S.D."/>
            <person name="Kilian M."/>
            <person name="Ehrlich G.D."/>
            <person name="Rappuoli R."/>
            <person name="Moxon E.R."/>
            <person name="Masignani V."/>
        </authorList>
    </citation>
    <scope>NUCLEOTIDE SEQUENCE [LARGE SCALE GENOMIC DNA]</scope>
    <source>
        <strain>Hungary19A-6</strain>
    </source>
</reference>
<accession>B1ICG3</accession>
<comment type="function">
    <text evidence="1">Enables the recognition and targeting of unfolded and aggregated proteins to the ClpC protease or to other proteins involved in proteolysis.</text>
</comment>
<comment type="subunit">
    <text evidence="1">Homodimer.</text>
</comment>
<comment type="domain">
    <text>The N-terminal domain probably binds unfolded/aggregated proteins; the C-terminal domain interacts with ClpC.</text>
</comment>
<comment type="similarity">
    <text evidence="1">Belongs to the MecA family.</text>
</comment>
<organism>
    <name type="scientific">Streptococcus pneumoniae (strain Hungary19A-6)</name>
    <dbReference type="NCBI Taxonomy" id="487214"/>
    <lineage>
        <taxon>Bacteria</taxon>
        <taxon>Bacillati</taxon>
        <taxon>Bacillota</taxon>
        <taxon>Bacilli</taxon>
        <taxon>Lactobacillales</taxon>
        <taxon>Streptococcaceae</taxon>
        <taxon>Streptococcus</taxon>
    </lineage>
</organism>